<reference key="1">
    <citation type="journal article" date="1997" name="Nature">
        <title>Genomic sequence of a Lyme disease spirochaete, Borrelia burgdorferi.</title>
        <authorList>
            <person name="Fraser C.M."/>
            <person name="Casjens S."/>
            <person name="Huang W.M."/>
            <person name="Sutton G.G."/>
            <person name="Clayton R.A."/>
            <person name="Lathigra R."/>
            <person name="White O."/>
            <person name="Ketchum K.A."/>
            <person name="Dodson R.J."/>
            <person name="Hickey E.K."/>
            <person name="Gwinn M.L."/>
            <person name="Dougherty B.A."/>
            <person name="Tomb J.-F."/>
            <person name="Fleischmann R.D."/>
            <person name="Richardson D.L."/>
            <person name="Peterson J.D."/>
            <person name="Kerlavage A.R."/>
            <person name="Quackenbush J."/>
            <person name="Salzberg S.L."/>
            <person name="Hanson M."/>
            <person name="van Vugt R."/>
            <person name="Palmer N."/>
            <person name="Adams M.D."/>
            <person name="Gocayne J.D."/>
            <person name="Weidman J.F."/>
            <person name="Utterback T.R."/>
            <person name="Watthey L."/>
            <person name="McDonald L.A."/>
            <person name="Artiach P."/>
            <person name="Bowman C."/>
            <person name="Garland S.A."/>
            <person name="Fujii C."/>
            <person name="Cotton M.D."/>
            <person name="Horst K."/>
            <person name="Roberts K.M."/>
            <person name="Hatch B."/>
            <person name="Smith H.O."/>
            <person name="Venter J.C."/>
        </authorList>
    </citation>
    <scope>NUCLEOTIDE SEQUENCE [LARGE SCALE GENOMIC DNA]</scope>
    <source>
        <strain>ATCC 35210 / DSM 4680 / CIP 102532 / B31</strain>
    </source>
</reference>
<reference key="2">
    <citation type="journal article" date="2000" name="Mol. Microbiol.">
        <title>A bacterial genome in flux: the twelve linear and nine circular extrachromosomal DNAs in an infectious isolate of the Lyme disease spirochete Borrelia burgdorferi.</title>
        <authorList>
            <person name="Casjens S."/>
            <person name="Palmer N."/>
            <person name="van Vugt R."/>
            <person name="Huang W.M."/>
            <person name="Stevenson B."/>
            <person name="Rosa P."/>
            <person name="Lathigra R."/>
            <person name="Sutton G.G."/>
            <person name="Peterson J.D."/>
            <person name="Dodson R.J."/>
            <person name="Haft D.H."/>
            <person name="Hickey E.K."/>
            <person name="Gwinn M.L."/>
            <person name="White O."/>
            <person name="Fraser C.M."/>
        </authorList>
    </citation>
    <scope>NUCLEOTIDE SEQUENCE [LARGE SCALE GENOMIC DNA]</scope>
    <source>
        <strain>ATCC 35210 / DSM 4680 / CIP 102532 / B31</strain>
    </source>
</reference>
<reference key="3">
    <citation type="journal article" date="2000" name="Infect. Immun.">
        <title>Expression and immunological analysis of the plasmid-borne mlp genes of Borrelia burgdorferi strain B31.</title>
        <authorList>
            <person name="Porcella S.F."/>
            <person name="Fitzpatrick C.A."/>
            <person name="Bono J.L."/>
        </authorList>
    </citation>
    <scope>FUNCTION</scope>
    <scope>ANTIGENICITY</scope>
    <scope>SUBCELLULAR LOCATION</scope>
    <scope>INDUCTION AT 35 DEGREES CELSIUS</scope>
    <source>
        <strain>B31-4A</strain>
        <plasmid>cp32-4</plasmid>
    </source>
</reference>
<proteinExistence type="evidence at transcript level"/>
<dbReference type="EMBL" id="AE001577">
    <property type="protein sequence ID" value="AAF07504.1"/>
    <property type="molecule type" value="Genomic_DNA"/>
</dbReference>
<dbReference type="RefSeq" id="NP_051275.1">
    <property type="nucleotide sequence ID" value="NC_000950.1"/>
</dbReference>
<dbReference type="RefSeq" id="WP_010883780.1">
    <property type="nucleotide sequence ID" value="NC_000950.1"/>
</dbReference>
<dbReference type="SMR" id="Q9S0E8"/>
<dbReference type="EnsemblBacteria" id="AAF07504">
    <property type="protein sequence ID" value="AAF07504"/>
    <property type="gene ID" value="BB_R28"/>
</dbReference>
<dbReference type="KEGG" id="bbu:BB_R28"/>
<dbReference type="PATRIC" id="fig|224326.49.peg.115"/>
<dbReference type="HOGENOM" id="CLU_134260_0_0_12"/>
<dbReference type="OrthoDB" id="351076at2"/>
<dbReference type="Proteomes" id="UP000001807">
    <property type="component" value="Plasmid cp32-4"/>
</dbReference>
<dbReference type="GO" id="GO:0009279">
    <property type="term" value="C:cell outer membrane"/>
    <property type="evidence" value="ECO:0007669"/>
    <property type="project" value="UniProtKB-SubCell"/>
</dbReference>
<dbReference type="InterPro" id="IPR004983">
    <property type="entry name" value="Mlp"/>
</dbReference>
<dbReference type="Pfam" id="PF03304">
    <property type="entry name" value="Mlp"/>
    <property type="match status" value="1"/>
</dbReference>
<organism>
    <name type="scientific">Borreliella burgdorferi (strain ATCC 35210 / DSM 4680 / CIP 102532 / B31)</name>
    <name type="common">Borrelia burgdorferi</name>
    <dbReference type="NCBI Taxonomy" id="224326"/>
    <lineage>
        <taxon>Bacteria</taxon>
        <taxon>Pseudomonadati</taxon>
        <taxon>Spirochaetota</taxon>
        <taxon>Spirochaetia</taxon>
        <taxon>Spirochaetales</taxon>
        <taxon>Borreliaceae</taxon>
        <taxon>Borreliella</taxon>
    </lineage>
</organism>
<evidence type="ECO:0000256" key="1">
    <source>
        <dbReference type="SAM" id="MobiDB-lite"/>
    </source>
</evidence>
<evidence type="ECO:0000269" key="2">
    <source>
    </source>
</evidence>
<evidence type="ECO:0000303" key="3">
    <source>
    </source>
</evidence>
<evidence type="ECO:0000305" key="4"/>
<evidence type="ECO:0000305" key="5">
    <source>
    </source>
</evidence>
<comment type="function">
    <text evidence="2 5">An outer membrane protein that may participate in pathogenesis. Some human Lyme disease patients have antibodies against this protein (PubMed:10948116). The Mlp proteins probably undergo intragenic recombination, generating new alleles (Probable).</text>
</comment>
<comment type="subcellular location">
    <subcellularLocation>
        <location evidence="5">Cell outer membrane</location>
        <topology evidence="5">Lipid-anchor</topology>
    </subcellularLocation>
</comment>
<comment type="induction">
    <text evidence="2">Weakly induced when grown at 35 degrees Celsius.</text>
</comment>
<comment type="similarity">
    <text evidence="4">Belongs to the Multicopy lipoprotein (Mlp) family.</text>
</comment>
<sequence length="140" mass="15862">MKIINILFCLFLLMLNGCNSNDTNNSQTKSRQKRDLTQKEATQEKPKSKEELLREKLNDNQKTHLDWLKEALGNDGEFNKFLGYDESKIKSALDHIKSELDSCTGDKVENKNTFKQVVQEALKGGIDGFENTASSTCKNS</sequence>
<accession>Q9S0E8</accession>
<feature type="signal peptide" evidence="4">
    <location>
        <begin position="1"/>
        <end position="17"/>
    </location>
</feature>
<feature type="chain" id="PRO_5004336869" description="Lipoprotein MlpD" evidence="4">
    <location>
        <begin position="18"/>
        <end position="140"/>
    </location>
</feature>
<feature type="region of interest" description="Disordered" evidence="1">
    <location>
        <begin position="22"/>
        <end position="53"/>
    </location>
</feature>
<feature type="compositionally biased region" description="Basic and acidic residues" evidence="1">
    <location>
        <begin position="33"/>
        <end position="53"/>
    </location>
</feature>
<feature type="lipid moiety-binding region" description="N-palmitoyl cysteine" evidence="4">
    <location>
        <position position="18"/>
    </location>
</feature>
<feature type="lipid moiety-binding region" description="S-diacylglycerol cysteine" evidence="4">
    <location>
        <position position="18"/>
    </location>
</feature>
<gene>
    <name evidence="3" type="primary">mlpD</name>
    <name type="ordered locus">BB_R28</name>
</gene>
<keyword id="KW-0998">Cell outer membrane</keyword>
<keyword id="KW-0449">Lipoprotein</keyword>
<keyword id="KW-0472">Membrane</keyword>
<keyword id="KW-0564">Palmitate</keyword>
<keyword id="KW-0614">Plasmid</keyword>
<keyword id="KW-1185">Reference proteome</keyword>
<keyword id="KW-0732">Signal</keyword>
<name>MLPD_BORBU</name>
<geneLocation type="plasmid">
    <name>cp32-4</name>
</geneLocation>
<protein>
    <recommendedName>
        <fullName evidence="3">Lipoprotein MlpD</fullName>
    </recommendedName>
</protein>